<comment type="function">
    <text evidence="2">GPI-anchored cell wall protein involved in stabilizing the cell wall (By similarity).</text>
</comment>
<comment type="subcellular location">
    <subcellularLocation>
        <location evidence="1">Secreted</location>
    </subcellularLocation>
    <subcellularLocation>
        <location evidence="3">Secreted</location>
        <location evidence="3">Cell wall</location>
    </subcellularLocation>
    <subcellularLocation>
        <location evidence="2">Cell membrane</location>
        <topology evidence="2">Lipid-anchor</topology>
        <topology evidence="2">GPI-anchor</topology>
    </subcellularLocation>
    <text evidence="3">Found anchored in the cell membrane as well as a covalently-linked GPI-modified cell wall protein (GPI-CWP).</text>
</comment>
<comment type="domain">
    <text evidence="4">The CFEM domain is involved in heme-binding and contains 8 cysteines and is found in proteins from several pathogenic fungi, including both human and plant pathogens (By similarity). The CFEM domain adopts a novel helical-basket fold that consists of six alpha-helices, and is uniquely stabilized by four disulfide bonds formed by its 8 signature cysteines (By similarity).</text>
</comment>
<comment type="PTM">
    <text evidence="8">The GPI-anchor is attached to the protein in the endoplasmic reticulum and serves to target the protein to the cell surface. There, the glucosamine-inositol phospholipid moiety is cleaved off and the GPI-modified mannoprotein is covalently attached via its lipidless GPI glycan remnant to the 1,6-beta-glucan of the outer cell wall layer.</text>
</comment>
<comment type="similarity">
    <text evidence="8">Belongs to the RBT5 family.</text>
</comment>
<sequence length="188" mass="17726">MKLSVVALAALVSVAAAQGVSELPKCAQDCASKGFPSSCGADVKCVCTSNSFLDAITCCVATTCTAEEQKKTIQFAKGICGGVGVNVPDSAVCPTGGSSSSGSASSTPTSSGGSSSETGSVTGTAITGTNSPTPTSRRPSGSSTAHSSGSGSPATSTGAPTQTGNAAASVNANGGLLAAIAALVIAVA</sequence>
<organism>
    <name type="scientific">Arthroderma benhamiae (strain ATCC MYA-4681 / CBS 112371)</name>
    <name type="common">Trichophyton mentagrophytes</name>
    <dbReference type="NCBI Taxonomy" id="663331"/>
    <lineage>
        <taxon>Eukaryota</taxon>
        <taxon>Fungi</taxon>
        <taxon>Dikarya</taxon>
        <taxon>Ascomycota</taxon>
        <taxon>Pezizomycotina</taxon>
        <taxon>Eurotiomycetes</taxon>
        <taxon>Eurotiomycetidae</taxon>
        <taxon>Onygenales</taxon>
        <taxon>Arthrodermataceae</taxon>
        <taxon>Trichophyton</taxon>
    </lineage>
</organism>
<protein>
    <recommendedName>
        <fullName evidence="8">GPI-anchored hemophore ARB_01017</fullName>
    </recommendedName>
    <alternativeName>
        <fullName evidence="8">GPI-anchored CFEM domain protein ARB_01017</fullName>
    </alternativeName>
</protein>
<gene>
    <name type="ORF">ARB_01017</name>
</gene>
<dbReference type="EMBL" id="ABSU01000017">
    <property type="protein sequence ID" value="EFE32126.1"/>
    <property type="molecule type" value="Genomic_DNA"/>
</dbReference>
<dbReference type="RefSeq" id="XP_003012766.1">
    <property type="nucleotide sequence ID" value="XM_003012720.1"/>
</dbReference>
<dbReference type="SMR" id="D4AXU8"/>
<dbReference type="STRING" id="663331.D4AXU8"/>
<dbReference type="GeneID" id="9522844"/>
<dbReference type="KEGG" id="abe:ARB_01017"/>
<dbReference type="eggNOG" id="ENOG502SD7M">
    <property type="taxonomic scope" value="Eukaryota"/>
</dbReference>
<dbReference type="HOGENOM" id="CLU_063084_1_1_1"/>
<dbReference type="OMA" id="DVACCIA"/>
<dbReference type="OrthoDB" id="3065412at2759"/>
<dbReference type="Proteomes" id="UP000008866">
    <property type="component" value="Unassembled WGS sequence"/>
</dbReference>
<dbReference type="GO" id="GO:0005576">
    <property type="term" value="C:extracellular region"/>
    <property type="evidence" value="ECO:0007669"/>
    <property type="project" value="UniProtKB-SubCell"/>
</dbReference>
<dbReference type="GO" id="GO:0005886">
    <property type="term" value="C:plasma membrane"/>
    <property type="evidence" value="ECO:0007669"/>
    <property type="project" value="UniProtKB-SubCell"/>
</dbReference>
<dbReference type="GO" id="GO:0098552">
    <property type="term" value="C:side of membrane"/>
    <property type="evidence" value="ECO:0007669"/>
    <property type="project" value="UniProtKB-KW"/>
</dbReference>
<dbReference type="GO" id="GO:0046872">
    <property type="term" value="F:metal ion binding"/>
    <property type="evidence" value="ECO:0007669"/>
    <property type="project" value="UniProtKB-KW"/>
</dbReference>
<dbReference type="InterPro" id="IPR051735">
    <property type="entry name" value="CFEM_domain"/>
</dbReference>
<dbReference type="InterPro" id="IPR008427">
    <property type="entry name" value="Extracellular_membr_CFEM_dom"/>
</dbReference>
<dbReference type="PANTHER" id="PTHR37928">
    <property type="entry name" value="CFEM DOMAIN PROTEIN (AFU_ORTHOLOGUE AFUA_6G14090)"/>
    <property type="match status" value="1"/>
</dbReference>
<dbReference type="PANTHER" id="PTHR37928:SF2">
    <property type="entry name" value="GPI ANCHORED CFEM DOMAIN PROTEIN (AFU_ORTHOLOGUE AFUA_6G10580)"/>
    <property type="match status" value="1"/>
</dbReference>
<dbReference type="Pfam" id="PF05730">
    <property type="entry name" value="CFEM"/>
    <property type="match status" value="1"/>
</dbReference>
<dbReference type="PROSITE" id="PS52012">
    <property type="entry name" value="CFEM"/>
    <property type="match status" value="1"/>
</dbReference>
<feature type="signal peptide" evidence="5">
    <location>
        <begin position="1"/>
        <end position="17"/>
    </location>
</feature>
<feature type="chain" id="PRO_5003053753" description="GPI-anchored hemophore ARB_01017">
    <location>
        <begin position="18"/>
        <end position="165"/>
    </location>
</feature>
<feature type="propeptide" id="PRO_0000434926" description="Removed in mature form" evidence="5">
    <location>
        <begin position="166"/>
        <end position="188"/>
    </location>
</feature>
<feature type="domain" description="CFEM" evidence="6">
    <location>
        <begin position="18"/>
        <end position="107"/>
    </location>
</feature>
<feature type="region of interest" description="Disordered" evidence="7">
    <location>
        <begin position="95"/>
        <end position="163"/>
    </location>
</feature>
<feature type="binding site" description="axial binding residue" evidence="6">
    <location>
        <position position="42"/>
    </location>
    <ligand>
        <name>heme</name>
        <dbReference type="ChEBI" id="CHEBI:30413"/>
    </ligand>
    <ligandPart>
        <name>Fe</name>
        <dbReference type="ChEBI" id="CHEBI:18248"/>
    </ligandPart>
</feature>
<feature type="lipid moiety-binding region" description="GPI-anchor amidated asparagine" evidence="5">
    <location>
        <position position="165"/>
    </location>
</feature>
<feature type="disulfide bond" evidence="6">
    <location>
        <begin position="26"/>
        <end position="64"/>
    </location>
</feature>
<feature type="disulfide bond" evidence="6">
    <location>
        <begin position="30"/>
        <end position="59"/>
    </location>
</feature>
<feature type="disulfide bond" evidence="6">
    <location>
        <begin position="39"/>
        <end position="45"/>
    </location>
</feature>
<feature type="disulfide bond" evidence="6">
    <location>
        <begin position="47"/>
        <end position="80"/>
    </location>
</feature>
<accession>D4AXU8</accession>
<keyword id="KW-1003">Cell membrane</keyword>
<keyword id="KW-0134">Cell wall</keyword>
<keyword id="KW-1015">Disulfide bond</keyword>
<keyword id="KW-0325">Glycoprotein</keyword>
<keyword id="KW-0336">GPI-anchor</keyword>
<keyword id="KW-0349">Heme</keyword>
<keyword id="KW-0408">Iron</keyword>
<keyword id="KW-0449">Lipoprotein</keyword>
<keyword id="KW-0472">Membrane</keyword>
<keyword id="KW-0479">Metal-binding</keyword>
<keyword id="KW-1185">Reference proteome</keyword>
<keyword id="KW-0964">Secreted</keyword>
<keyword id="KW-0732">Signal</keyword>
<proteinExistence type="inferred from homology"/>
<name>CFMC_ARTBC</name>
<reference key="1">
    <citation type="journal article" date="2011" name="Genome Biol.">
        <title>Comparative and functional genomics provide insights into the pathogenicity of dermatophytic fungi.</title>
        <authorList>
            <person name="Burmester A."/>
            <person name="Shelest E."/>
            <person name="Gloeckner G."/>
            <person name="Heddergott C."/>
            <person name="Schindler S."/>
            <person name="Staib P."/>
            <person name="Heidel A."/>
            <person name="Felder M."/>
            <person name="Petzold A."/>
            <person name="Szafranski K."/>
            <person name="Feuermann M."/>
            <person name="Pedruzzi I."/>
            <person name="Priebe S."/>
            <person name="Groth M."/>
            <person name="Winkler R."/>
            <person name="Li W."/>
            <person name="Kniemeyer O."/>
            <person name="Schroeckh V."/>
            <person name="Hertweck C."/>
            <person name="Hube B."/>
            <person name="White T.C."/>
            <person name="Platzer M."/>
            <person name="Guthke R."/>
            <person name="Heitman J."/>
            <person name="Woestemeyer J."/>
            <person name="Zipfel P.F."/>
            <person name="Monod M."/>
            <person name="Brakhage A.A."/>
        </authorList>
    </citation>
    <scope>NUCLEOTIDE SEQUENCE [LARGE SCALE GENOMIC DNA]</scope>
    <source>
        <strain>ATCC MYA-4681 / CBS 112371</strain>
    </source>
</reference>
<evidence type="ECO:0000250" key="1">
    <source>
        <dbReference type="UniProtKB" id="D4AZC5"/>
    </source>
</evidence>
<evidence type="ECO:0000250" key="2">
    <source>
        <dbReference type="UniProtKB" id="Q4WLB9"/>
    </source>
</evidence>
<evidence type="ECO:0000250" key="3">
    <source>
        <dbReference type="UniProtKB" id="Q59UT4"/>
    </source>
</evidence>
<evidence type="ECO:0000250" key="4">
    <source>
        <dbReference type="UniProtKB" id="Q5A0X8"/>
    </source>
</evidence>
<evidence type="ECO:0000255" key="5"/>
<evidence type="ECO:0000255" key="6">
    <source>
        <dbReference type="PROSITE-ProRule" id="PRU01356"/>
    </source>
</evidence>
<evidence type="ECO:0000256" key="7">
    <source>
        <dbReference type="SAM" id="MobiDB-lite"/>
    </source>
</evidence>
<evidence type="ECO:0000305" key="8"/>